<keyword id="KW-0030">Aminoacyl-tRNA synthetase</keyword>
<keyword id="KW-0067">ATP-binding</keyword>
<keyword id="KW-0963">Cytoplasm</keyword>
<keyword id="KW-0436">Ligase</keyword>
<keyword id="KW-0460">Magnesium</keyword>
<keyword id="KW-0479">Metal-binding</keyword>
<keyword id="KW-0547">Nucleotide-binding</keyword>
<keyword id="KW-0648">Protein biosynthesis</keyword>
<keyword id="KW-1185">Reference proteome</keyword>
<keyword id="KW-0694">RNA-binding</keyword>
<keyword id="KW-0820">tRNA-binding</keyword>
<reference key="1">
    <citation type="journal article" date="2001" name="J. Bacteriol.">
        <title>Genome of the bacterium Streptococcus pneumoniae strain R6.</title>
        <authorList>
            <person name="Hoskins J."/>
            <person name="Alborn W.E. Jr."/>
            <person name="Arnold J."/>
            <person name="Blaszczak L.C."/>
            <person name="Burgett S."/>
            <person name="DeHoff B.S."/>
            <person name="Estrem S.T."/>
            <person name="Fritz L."/>
            <person name="Fu D.-J."/>
            <person name="Fuller W."/>
            <person name="Geringer C."/>
            <person name="Gilmour R."/>
            <person name="Glass J.S."/>
            <person name="Khoja H."/>
            <person name="Kraft A.R."/>
            <person name="Lagace R.E."/>
            <person name="LeBlanc D.J."/>
            <person name="Lee L.N."/>
            <person name="Lefkowitz E.J."/>
            <person name="Lu J."/>
            <person name="Matsushima P."/>
            <person name="McAhren S.M."/>
            <person name="McHenney M."/>
            <person name="McLeaster K."/>
            <person name="Mundy C.W."/>
            <person name="Nicas T.I."/>
            <person name="Norris F.H."/>
            <person name="O'Gara M."/>
            <person name="Peery R.B."/>
            <person name="Robertson G.T."/>
            <person name="Rockey P."/>
            <person name="Sun P.-M."/>
            <person name="Winkler M.E."/>
            <person name="Yang Y."/>
            <person name="Young-Bellido M."/>
            <person name="Zhao G."/>
            <person name="Zook C.A."/>
            <person name="Baltz R.H."/>
            <person name="Jaskunas S.R."/>
            <person name="Rosteck P.R. Jr."/>
            <person name="Skatrud P.L."/>
            <person name="Glass J.I."/>
        </authorList>
    </citation>
    <scope>NUCLEOTIDE SEQUENCE [LARGE SCALE GENOMIC DNA]</scope>
    <source>
        <strain>ATCC BAA-255 / R6</strain>
    </source>
</reference>
<gene>
    <name evidence="1" type="primary">pheT</name>
    <name type="ordered locus">spr0509</name>
</gene>
<evidence type="ECO:0000255" key="1">
    <source>
        <dbReference type="HAMAP-Rule" id="MF_00283"/>
    </source>
</evidence>
<dbReference type="EC" id="6.1.1.20" evidence="1"/>
<dbReference type="EMBL" id="AE007317">
    <property type="protein sequence ID" value="AAK99313.1"/>
    <property type="molecule type" value="Genomic_DNA"/>
</dbReference>
<dbReference type="PIR" id="E97935">
    <property type="entry name" value="E97935"/>
</dbReference>
<dbReference type="RefSeq" id="NP_358103.1">
    <property type="nucleotide sequence ID" value="NC_003098.1"/>
</dbReference>
<dbReference type="RefSeq" id="WP_000909142.1">
    <property type="nucleotide sequence ID" value="NC_003098.1"/>
</dbReference>
<dbReference type="SMR" id="Q8DQT6"/>
<dbReference type="STRING" id="171101.spr0509"/>
<dbReference type="GeneID" id="45654006"/>
<dbReference type="KEGG" id="spr:spr0509"/>
<dbReference type="PATRIC" id="fig|171101.6.peg.561"/>
<dbReference type="eggNOG" id="COG0072">
    <property type="taxonomic scope" value="Bacteria"/>
</dbReference>
<dbReference type="eggNOG" id="COG0073">
    <property type="taxonomic scope" value="Bacteria"/>
</dbReference>
<dbReference type="HOGENOM" id="CLU_016891_0_0_9"/>
<dbReference type="Proteomes" id="UP000000586">
    <property type="component" value="Chromosome"/>
</dbReference>
<dbReference type="GO" id="GO:0009328">
    <property type="term" value="C:phenylalanine-tRNA ligase complex"/>
    <property type="evidence" value="ECO:0000318"/>
    <property type="project" value="GO_Central"/>
</dbReference>
<dbReference type="GO" id="GO:0005524">
    <property type="term" value="F:ATP binding"/>
    <property type="evidence" value="ECO:0007669"/>
    <property type="project" value="UniProtKB-UniRule"/>
</dbReference>
<dbReference type="GO" id="GO:0140096">
    <property type="term" value="F:catalytic activity, acting on a protein"/>
    <property type="evidence" value="ECO:0007669"/>
    <property type="project" value="UniProtKB-ARBA"/>
</dbReference>
<dbReference type="GO" id="GO:0000287">
    <property type="term" value="F:magnesium ion binding"/>
    <property type="evidence" value="ECO:0007669"/>
    <property type="project" value="UniProtKB-UniRule"/>
</dbReference>
<dbReference type="GO" id="GO:0004826">
    <property type="term" value="F:phenylalanine-tRNA ligase activity"/>
    <property type="evidence" value="ECO:0007669"/>
    <property type="project" value="UniProtKB-UniRule"/>
</dbReference>
<dbReference type="GO" id="GO:0016740">
    <property type="term" value="F:transferase activity"/>
    <property type="evidence" value="ECO:0007669"/>
    <property type="project" value="UniProtKB-ARBA"/>
</dbReference>
<dbReference type="GO" id="GO:0000049">
    <property type="term" value="F:tRNA binding"/>
    <property type="evidence" value="ECO:0007669"/>
    <property type="project" value="UniProtKB-KW"/>
</dbReference>
<dbReference type="GO" id="GO:0006432">
    <property type="term" value="P:phenylalanyl-tRNA aminoacylation"/>
    <property type="evidence" value="ECO:0000318"/>
    <property type="project" value="GO_Central"/>
</dbReference>
<dbReference type="CDD" id="cd00769">
    <property type="entry name" value="PheRS_beta_core"/>
    <property type="match status" value="1"/>
</dbReference>
<dbReference type="CDD" id="cd02796">
    <property type="entry name" value="tRNA_bind_bactPheRS"/>
    <property type="match status" value="1"/>
</dbReference>
<dbReference type="FunFam" id="2.40.50.140:FF:000045">
    <property type="entry name" value="Phenylalanine--tRNA ligase beta subunit"/>
    <property type="match status" value="1"/>
</dbReference>
<dbReference type="FunFam" id="3.30.56.10:FF:000002">
    <property type="entry name" value="Phenylalanine--tRNA ligase beta subunit"/>
    <property type="match status" value="1"/>
</dbReference>
<dbReference type="FunFam" id="3.30.70.380:FF:000001">
    <property type="entry name" value="Phenylalanine--tRNA ligase beta subunit"/>
    <property type="match status" value="1"/>
</dbReference>
<dbReference type="FunFam" id="3.30.930.10:FF:000022">
    <property type="entry name" value="Phenylalanine--tRNA ligase beta subunit"/>
    <property type="match status" value="1"/>
</dbReference>
<dbReference type="FunFam" id="3.50.40.10:FF:000001">
    <property type="entry name" value="Phenylalanine--tRNA ligase beta subunit"/>
    <property type="match status" value="1"/>
</dbReference>
<dbReference type="Gene3D" id="3.30.56.10">
    <property type="match status" value="2"/>
</dbReference>
<dbReference type="Gene3D" id="3.30.930.10">
    <property type="entry name" value="Bira Bifunctional Protein, Domain 2"/>
    <property type="match status" value="1"/>
</dbReference>
<dbReference type="Gene3D" id="3.30.70.380">
    <property type="entry name" value="Ferrodoxin-fold anticodon-binding domain"/>
    <property type="match status" value="1"/>
</dbReference>
<dbReference type="Gene3D" id="2.40.50.140">
    <property type="entry name" value="Nucleic acid-binding proteins"/>
    <property type="match status" value="1"/>
</dbReference>
<dbReference type="Gene3D" id="3.50.40.10">
    <property type="entry name" value="Phenylalanyl-trna Synthetase, Chain B, domain 3"/>
    <property type="match status" value="1"/>
</dbReference>
<dbReference type="HAMAP" id="MF_00283">
    <property type="entry name" value="Phe_tRNA_synth_beta1"/>
    <property type="match status" value="1"/>
</dbReference>
<dbReference type="InterPro" id="IPR045864">
    <property type="entry name" value="aa-tRNA-synth_II/BPL/LPL"/>
</dbReference>
<dbReference type="InterPro" id="IPR005146">
    <property type="entry name" value="B3/B4_tRNA-bd"/>
</dbReference>
<dbReference type="InterPro" id="IPR009061">
    <property type="entry name" value="DNA-bd_dom_put_sf"/>
</dbReference>
<dbReference type="InterPro" id="IPR005121">
    <property type="entry name" value="Fdx_antiC-bd"/>
</dbReference>
<dbReference type="InterPro" id="IPR036690">
    <property type="entry name" value="Fdx_antiC-bd_sf"/>
</dbReference>
<dbReference type="InterPro" id="IPR012340">
    <property type="entry name" value="NA-bd_OB-fold"/>
</dbReference>
<dbReference type="InterPro" id="IPR045060">
    <property type="entry name" value="Phe-tRNA-ligase_IIc_bsu"/>
</dbReference>
<dbReference type="InterPro" id="IPR004532">
    <property type="entry name" value="Phe-tRNA-ligase_IIc_bsu_bact"/>
</dbReference>
<dbReference type="InterPro" id="IPR020825">
    <property type="entry name" value="Phe-tRNA_synthase-like_B3/B4"/>
</dbReference>
<dbReference type="InterPro" id="IPR041616">
    <property type="entry name" value="PheRS_beta_core"/>
</dbReference>
<dbReference type="InterPro" id="IPR002547">
    <property type="entry name" value="tRNA-bd_dom"/>
</dbReference>
<dbReference type="InterPro" id="IPR033714">
    <property type="entry name" value="tRNA_bind_bactPheRS"/>
</dbReference>
<dbReference type="InterPro" id="IPR005147">
    <property type="entry name" value="tRNA_synthase_B5-dom"/>
</dbReference>
<dbReference type="NCBIfam" id="TIGR00472">
    <property type="entry name" value="pheT_bact"/>
    <property type="match status" value="1"/>
</dbReference>
<dbReference type="NCBIfam" id="NF045760">
    <property type="entry name" value="YtpR"/>
    <property type="match status" value="1"/>
</dbReference>
<dbReference type="PANTHER" id="PTHR10947:SF0">
    <property type="entry name" value="PHENYLALANINE--TRNA LIGASE BETA SUBUNIT"/>
    <property type="match status" value="1"/>
</dbReference>
<dbReference type="PANTHER" id="PTHR10947">
    <property type="entry name" value="PHENYLALANYL-TRNA SYNTHETASE BETA CHAIN AND LEUCINE-RICH REPEAT-CONTAINING PROTEIN 47"/>
    <property type="match status" value="1"/>
</dbReference>
<dbReference type="Pfam" id="PF03483">
    <property type="entry name" value="B3_4"/>
    <property type="match status" value="1"/>
</dbReference>
<dbReference type="Pfam" id="PF03484">
    <property type="entry name" value="B5"/>
    <property type="match status" value="1"/>
</dbReference>
<dbReference type="Pfam" id="PF03147">
    <property type="entry name" value="FDX-ACB"/>
    <property type="match status" value="1"/>
</dbReference>
<dbReference type="Pfam" id="PF01588">
    <property type="entry name" value="tRNA_bind"/>
    <property type="match status" value="1"/>
</dbReference>
<dbReference type="Pfam" id="PF17759">
    <property type="entry name" value="tRNA_synthFbeta"/>
    <property type="match status" value="1"/>
</dbReference>
<dbReference type="SMART" id="SM00873">
    <property type="entry name" value="B3_4"/>
    <property type="match status" value="1"/>
</dbReference>
<dbReference type="SMART" id="SM00874">
    <property type="entry name" value="B5"/>
    <property type="match status" value="1"/>
</dbReference>
<dbReference type="SMART" id="SM00896">
    <property type="entry name" value="FDX-ACB"/>
    <property type="match status" value="1"/>
</dbReference>
<dbReference type="SUPFAM" id="SSF54991">
    <property type="entry name" value="Anticodon-binding domain of PheRS"/>
    <property type="match status" value="1"/>
</dbReference>
<dbReference type="SUPFAM" id="SSF55681">
    <property type="entry name" value="Class II aaRS and biotin synthetases"/>
    <property type="match status" value="1"/>
</dbReference>
<dbReference type="SUPFAM" id="SSF50249">
    <property type="entry name" value="Nucleic acid-binding proteins"/>
    <property type="match status" value="1"/>
</dbReference>
<dbReference type="SUPFAM" id="SSF56037">
    <property type="entry name" value="PheT/TilS domain"/>
    <property type="match status" value="1"/>
</dbReference>
<dbReference type="SUPFAM" id="SSF46955">
    <property type="entry name" value="Putative DNA-binding domain"/>
    <property type="match status" value="1"/>
</dbReference>
<dbReference type="PROSITE" id="PS51483">
    <property type="entry name" value="B5"/>
    <property type="match status" value="1"/>
</dbReference>
<dbReference type="PROSITE" id="PS51447">
    <property type="entry name" value="FDX_ACB"/>
    <property type="match status" value="1"/>
</dbReference>
<dbReference type="PROSITE" id="PS50886">
    <property type="entry name" value="TRBD"/>
    <property type="match status" value="1"/>
</dbReference>
<accession>Q8DQT6</accession>
<protein>
    <recommendedName>
        <fullName evidence="1">Phenylalanine--tRNA ligase beta subunit</fullName>
        <ecNumber evidence="1">6.1.1.20</ecNumber>
    </recommendedName>
    <alternativeName>
        <fullName evidence="1">Phenylalanyl-tRNA synthetase beta subunit</fullName>
        <shortName evidence="1">PheRS</shortName>
    </alternativeName>
</protein>
<sequence>MLISYKWLKELVDIDVPSQELAEKMSTTGIEVEGVESPAAGLSKIVVGEVLSCEDVPETHLHVCQVNVGEEERQIVCGAPNVRAGIKVMVALPGARIADNYKIKKGKIRGLESLGMICSLGELGISDSVVPKEFADGIQILPEDAVPGEEVFSYLDLDDEIIELSITPNRADALSMCGVAHEVAAIYDKAVNFKEFTLTETNEAAADALSVSIETDKAPYYAARILDNVTIAPSPQWLQNLLMNEGIRPINNVVDVTNYILLYFGQPMHAFDLDNFEGTDIRVREARAGEKLVTLDGEERDLDVNDLVITVADKPVALAGVMGGQATEISEKSSRVVLEAAVFNGKSIRKTSGRLNLRSESSSRFEKGINVATVNEALDAAASLIAELAGATVRKGIVSAGELDTSDVEVSSTLADVNRVLGTELSYADVEDVFRRLGFGLSGNADSFTVRVPRRRWDITIEADLFEEIARIYGYDRLPTSLPKDDGTAGELTATQKLRRQVRTIAEGAGLTEIITYTLTTPEKAVEFTAQPSNLTELMWPMTVDRSVLRQNMISGILDTVAYNVARKNKNLALYEIGKVFEQTGNPKEELPNEINSFAFALTGLVAEKDFQTAAVPVDFFYAKGILEALFTRLGLQVTYTATSEIASLHPGRTAVISLGDQVLGFLGQVHPVTAKAYDIPETYVAELNLSAIEAALQPATPFVEITKFPAVSRDVALLLKAEVTHQEVVDAIQAAGVKRLTDIKLFDVFSGEKLGLGMKSMAYSLTFQNPEDSLTDEEVARYMEKIQASLEEKVNAEVR</sequence>
<proteinExistence type="inferred from homology"/>
<name>SYFB_STRR6</name>
<comment type="catalytic activity">
    <reaction evidence="1">
        <text>tRNA(Phe) + L-phenylalanine + ATP = L-phenylalanyl-tRNA(Phe) + AMP + diphosphate + H(+)</text>
        <dbReference type="Rhea" id="RHEA:19413"/>
        <dbReference type="Rhea" id="RHEA-COMP:9668"/>
        <dbReference type="Rhea" id="RHEA-COMP:9699"/>
        <dbReference type="ChEBI" id="CHEBI:15378"/>
        <dbReference type="ChEBI" id="CHEBI:30616"/>
        <dbReference type="ChEBI" id="CHEBI:33019"/>
        <dbReference type="ChEBI" id="CHEBI:58095"/>
        <dbReference type="ChEBI" id="CHEBI:78442"/>
        <dbReference type="ChEBI" id="CHEBI:78531"/>
        <dbReference type="ChEBI" id="CHEBI:456215"/>
        <dbReference type="EC" id="6.1.1.20"/>
    </reaction>
</comment>
<comment type="cofactor">
    <cofactor evidence="1">
        <name>Mg(2+)</name>
        <dbReference type="ChEBI" id="CHEBI:18420"/>
    </cofactor>
    <text evidence="1">Binds 2 magnesium ions per tetramer.</text>
</comment>
<comment type="subunit">
    <text evidence="1">Tetramer of two alpha and two beta subunits.</text>
</comment>
<comment type="subcellular location">
    <subcellularLocation>
        <location>Cytoplasm</location>
    </subcellularLocation>
</comment>
<comment type="similarity">
    <text evidence="1">Belongs to the phenylalanyl-tRNA synthetase beta subunit family. Type 1 subfamily.</text>
</comment>
<organism>
    <name type="scientific">Streptococcus pneumoniae (strain ATCC BAA-255 / R6)</name>
    <dbReference type="NCBI Taxonomy" id="171101"/>
    <lineage>
        <taxon>Bacteria</taxon>
        <taxon>Bacillati</taxon>
        <taxon>Bacillota</taxon>
        <taxon>Bacilli</taxon>
        <taxon>Lactobacillales</taxon>
        <taxon>Streptococcaceae</taxon>
        <taxon>Streptococcus</taxon>
    </lineage>
</organism>
<feature type="chain" id="PRO_0000126963" description="Phenylalanine--tRNA ligase beta subunit">
    <location>
        <begin position="1"/>
        <end position="800"/>
    </location>
</feature>
<feature type="domain" description="tRNA-binding" evidence="1">
    <location>
        <begin position="39"/>
        <end position="152"/>
    </location>
</feature>
<feature type="domain" description="B5" evidence="1">
    <location>
        <begin position="405"/>
        <end position="480"/>
    </location>
</feature>
<feature type="domain" description="FDX-ACB" evidence="1">
    <location>
        <begin position="707"/>
        <end position="800"/>
    </location>
</feature>
<feature type="binding site" evidence="1">
    <location>
        <position position="458"/>
    </location>
    <ligand>
        <name>Mg(2+)</name>
        <dbReference type="ChEBI" id="CHEBI:18420"/>
        <note>shared with alpha subunit</note>
    </ligand>
</feature>
<feature type="binding site" evidence="1">
    <location>
        <position position="464"/>
    </location>
    <ligand>
        <name>Mg(2+)</name>
        <dbReference type="ChEBI" id="CHEBI:18420"/>
        <note>shared with alpha subunit</note>
    </ligand>
</feature>
<feature type="binding site" evidence="1">
    <location>
        <position position="467"/>
    </location>
    <ligand>
        <name>Mg(2+)</name>
        <dbReference type="ChEBI" id="CHEBI:18420"/>
        <note>shared with alpha subunit</note>
    </ligand>
</feature>
<feature type="binding site" evidence="1">
    <location>
        <position position="468"/>
    </location>
    <ligand>
        <name>Mg(2+)</name>
        <dbReference type="ChEBI" id="CHEBI:18420"/>
        <note>shared with alpha subunit</note>
    </ligand>
</feature>